<reference key="1">
    <citation type="submission" date="2005-11" db="EMBL/GenBank/DDBJ databases">
        <title>The NIAID influenza genome sequencing project.</title>
        <authorList>
            <person name="Ghedin E."/>
            <person name="Spiro D."/>
            <person name="Miller N."/>
            <person name="Zaborsky J."/>
            <person name="Feldblyum T."/>
            <person name="Subbu V."/>
            <person name="Shumway M."/>
            <person name="Sparenborg J."/>
            <person name="Groveman L."/>
            <person name="Halpin R."/>
            <person name="Sitz J."/>
            <person name="Koo H."/>
            <person name="Salzberg S.L."/>
            <person name="Webster R.G."/>
            <person name="Hoffmann E."/>
            <person name="Krauss S."/>
            <person name="Naeve C."/>
            <person name="Bao Y."/>
            <person name="Bolotov P."/>
            <person name="Dernovoy D."/>
            <person name="Kiryutin B."/>
            <person name="Lipman D.J."/>
            <person name="Tatusova T."/>
        </authorList>
    </citation>
    <scope>NUCLEOTIDE SEQUENCE [GENOMIC RNA]</scope>
</reference>
<dbReference type="EMBL" id="CY006048">
    <property type="protein sequence ID" value="ABB46398.1"/>
    <property type="molecule type" value="Genomic_RNA"/>
</dbReference>
<dbReference type="SMR" id="Q30NP6"/>
<dbReference type="Proteomes" id="UP000000827">
    <property type="component" value="Genome"/>
</dbReference>
<dbReference type="GO" id="GO:0042025">
    <property type="term" value="C:host cell nucleus"/>
    <property type="evidence" value="ECO:0007669"/>
    <property type="project" value="UniProtKB-SubCell"/>
</dbReference>
<dbReference type="GO" id="GO:0044423">
    <property type="term" value="C:virion component"/>
    <property type="evidence" value="ECO:0007669"/>
    <property type="project" value="UniProtKB-UniRule"/>
</dbReference>
<dbReference type="GO" id="GO:0039675">
    <property type="term" value="P:exit of virus from host cell nucleus through nuclear pore"/>
    <property type="evidence" value="ECO:0007669"/>
    <property type="project" value="UniProtKB-UniRule"/>
</dbReference>
<dbReference type="Gene3D" id="1.10.287.230">
    <property type="match status" value="1"/>
</dbReference>
<dbReference type="Gene3D" id="1.10.287.10">
    <property type="entry name" value="S15/NS1, RNA-binding"/>
    <property type="match status" value="1"/>
</dbReference>
<dbReference type="HAMAP" id="MF_04067">
    <property type="entry name" value="INFV_NEP"/>
    <property type="match status" value="1"/>
</dbReference>
<dbReference type="InterPro" id="IPR000968">
    <property type="entry name" value="Flu_NS2"/>
</dbReference>
<dbReference type="Pfam" id="PF00601">
    <property type="entry name" value="Flu_NS2"/>
    <property type="match status" value="1"/>
</dbReference>
<dbReference type="SUPFAM" id="SSF101156">
    <property type="entry name" value="Nonstructural protein ns2, Nep, M1-binding domain"/>
    <property type="match status" value="1"/>
</dbReference>
<proteinExistence type="inferred from homology"/>
<accession>Q30NP6</accession>
<comment type="function">
    <text evidence="1">Mediates the nuclear export of encapsidated genomic RNAs (ribonucleoproteins, RNPs). Acts as an adapter between viral RNPs complexes and the nuclear export machinery of the cell. Possesses no intrinsic RNA-binding activity, but includes a C-terminal M1-binding domain. This domain is believed to allow recognition of RNPs bound to the protein M1. Since protein M1 is not available in large quantities before late stages of infection, such an indirect recognition mechanism probably ensures that genomic RNPs are not exported from the host nucleus until sufficient quantities of viral mRNA and progeny genomic RNA have been synthesized. Furthermore, the RNPs enter the host cytoplasm only when associated with the M1 protein that is necessary to guide them to the plasma membrane. May down-regulate viral RNA synthesis when overproduced.</text>
</comment>
<comment type="subunit">
    <text evidence="1">Interacts with protein M1. May interact with host nucleoporin RAB/HRB and exportin XPO1/CRM1.</text>
</comment>
<comment type="subcellular location">
    <subcellularLocation>
        <location evidence="1">Virion</location>
    </subcellularLocation>
    <subcellularLocation>
        <location evidence="1">Host nucleus</location>
    </subcellularLocation>
</comment>
<comment type="alternative products">
    <event type="alternative splicing"/>
    <isoform>
        <id>Q30NP6-1</id>
        <name>NEP</name>
        <name>NS2</name>
        <sequence type="displayed"/>
    </isoform>
    <isoform>
        <id>Q30NP5-1</id>
        <name>NS1</name>
        <sequence type="external"/>
    </isoform>
</comment>
<comment type="similarity">
    <text evidence="1">Belongs to the influenza viruses NEP family.</text>
</comment>
<organism>
    <name type="scientific">Influenza A virus (strain A/Beijing/39/1975 H3N2)</name>
    <dbReference type="NCBI Taxonomy" id="383596"/>
    <lineage>
        <taxon>Viruses</taxon>
        <taxon>Riboviria</taxon>
        <taxon>Orthornavirae</taxon>
        <taxon>Negarnaviricota</taxon>
        <taxon>Polyploviricotina</taxon>
        <taxon>Insthoviricetes</taxon>
        <taxon>Articulavirales</taxon>
        <taxon>Orthomyxoviridae</taxon>
        <taxon>Alphainfluenzavirus</taxon>
        <taxon>Alphainfluenzavirus influenzae</taxon>
        <taxon>Influenza A virus</taxon>
    </lineage>
</organism>
<organismHost>
    <name type="scientific">Aves</name>
    <dbReference type="NCBI Taxonomy" id="8782"/>
</organismHost>
<organismHost>
    <name type="scientific">Cetacea</name>
    <name type="common">whales</name>
    <dbReference type="NCBI Taxonomy" id="9721"/>
</organismHost>
<organismHost>
    <name type="scientific">Homo sapiens</name>
    <name type="common">Human</name>
    <dbReference type="NCBI Taxonomy" id="9606"/>
</organismHost>
<organismHost>
    <name type="scientific">Phocidae</name>
    <name type="common">true seals</name>
    <dbReference type="NCBI Taxonomy" id="9709"/>
</organismHost>
<organismHost>
    <name type="scientific">Sus scrofa</name>
    <name type="common">Pig</name>
    <dbReference type="NCBI Taxonomy" id="9823"/>
</organismHost>
<name>NEP_I75A0</name>
<keyword id="KW-0025">Alternative splicing</keyword>
<keyword id="KW-1048">Host nucleus</keyword>
<keyword id="KW-0945">Host-virus interaction</keyword>
<keyword id="KW-0813">Transport</keyword>
<keyword id="KW-0946">Virion</keyword>
<sequence>MDSNTVSSFQDILLRMSKMQLGSSSEDLNGMITQFESLKLYRDSLGEAVMRMGDLHLLQNRNGKWREQLGQKFEEIRWLIEEVRHRLKTTENSFEQITFMQALQLLFEVEQEIRTFSFQLI</sequence>
<feature type="chain" id="PRO_0000324212" description="Nuclear export protein">
    <location>
        <begin position="1"/>
        <end position="121"/>
    </location>
</feature>
<feature type="short sequence motif" description="Nuclear export signal" evidence="1">
    <location>
        <begin position="12"/>
        <end position="21"/>
    </location>
</feature>
<feature type="short sequence motif" description="Nuclear export signal" evidence="1">
    <location>
        <begin position="85"/>
        <end position="94"/>
    </location>
</feature>
<evidence type="ECO:0000255" key="1">
    <source>
        <dbReference type="HAMAP-Rule" id="MF_04067"/>
    </source>
</evidence>
<gene>
    <name evidence="1" type="primary">NS</name>
</gene>
<protein>
    <recommendedName>
        <fullName evidence="1">Nuclear export protein</fullName>
        <shortName evidence="1">NEP</shortName>
    </recommendedName>
    <alternativeName>
        <fullName evidence="1">Non-structural protein 2</fullName>
        <shortName evidence="1">NS2</shortName>
    </alternativeName>
</protein>